<protein>
    <recommendedName>
        <fullName>GLIPR1-like protein 1</fullName>
    </recommendedName>
</protein>
<sequence length="241" mass="27167">MILRKKLSYLWTLGLCLVASKSPPKAPSITNDRFIEECLRLHNEARTNVSPPAADMKYMSWDEALAKTAEAWAKKCKFIHNSCSSKSFKCHPTFQYAGENLWLGPLTISAAKFAINMWYDERKFYDFNTRSCSQVCGHYTQVVWAYSYKVGCAVAVCPNLGSPDSALLVCNYAPAGNYPNMSPYTNGTPCSMCQGDTCENNLCRNKERDKSQRYPNWNPSGTRQLIACNPLYLISVLLTIF</sequence>
<gene>
    <name evidence="6" type="primary">GLIPR1L1</name>
</gene>
<dbReference type="EMBL" id="BC109660">
    <property type="protein sequence ID" value="AAI09661.1"/>
    <property type="molecule type" value="mRNA"/>
</dbReference>
<dbReference type="RefSeq" id="NP_001069825.1">
    <property type="nucleotide sequence ID" value="NM_001076357.2"/>
</dbReference>
<dbReference type="SMR" id="Q32LB5"/>
<dbReference type="FunCoup" id="Q32LB5">
    <property type="interactions" value="39"/>
</dbReference>
<dbReference type="STRING" id="9913.ENSBTAP00000006002"/>
<dbReference type="PaxDb" id="9913-ENSBTAP00000006002"/>
<dbReference type="Ensembl" id="ENSBTAT00000006002.4">
    <property type="protein sequence ID" value="ENSBTAP00000006002.3"/>
    <property type="gene ID" value="ENSBTAG00000004569.4"/>
</dbReference>
<dbReference type="GeneID" id="615034"/>
<dbReference type="KEGG" id="bta:615034"/>
<dbReference type="CTD" id="256710"/>
<dbReference type="VEuPathDB" id="HostDB:ENSBTAG00000004569"/>
<dbReference type="VGNC" id="VGNC:29403">
    <property type="gene designation" value="GLIPR1L1"/>
</dbReference>
<dbReference type="eggNOG" id="KOG3017">
    <property type="taxonomic scope" value="Eukaryota"/>
</dbReference>
<dbReference type="GeneTree" id="ENSGT00940000162547"/>
<dbReference type="HOGENOM" id="CLU_035730_2_0_1"/>
<dbReference type="InParanoid" id="Q32LB5"/>
<dbReference type="OMA" id="ACKFEHN"/>
<dbReference type="OrthoDB" id="43654at2759"/>
<dbReference type="TreeFam" id="TF316148"/>
<dbReference type="Proteomes" id="UP000009136">
    <property type="component" value="Chromosome 5"/>
</dbReference>
<dbReference type="Bgee" id="ENSBTAG00000004569">
    <property type="expression patterns" value="Expressed in spermatocyte and 22 other cell types or tissues"/>
</dbReference>
<dbReference type="GO" id="GO:0001669">
    <property type="term" value="C:acrosomal vesicle"/>
    <property type="evidence" value="ECO:0000250"/>
    <property type="project" value="UniProtKB"/>
</dbReference>
<dbReference type="GO" id="GO:0005615">
    <property type="term" value="C:extracellular space"/>
    <property type="evidence" value="ECO:0000318"/>
    <property type="project" value="GO_Central"/>
</dbReference>
<dbReference type="GO" id="GO:0045121">
    <property type="term" value="C:membrane raft"/>
    <property type="evidence" value="ECO:0007669"/>
    <property type="project" value="UniProtKB-SubCell"/>
</dbReference>
<dbReference type="GO" id="GO:0005886">
    <property type="term" value="C:plasma membrane"/>
    <property type="evidence" value="ECO:0007669"/>
    <property type="project" value="UniProtKB-SubCell"/>
</dbReference>
<dbReference type="GO" id="GO:0098635">
    <property type="term" value="C:protein complex involved in cell-cell adhesion"/>
    <property type="evidence" value="ECO:0000250"/>
    <property type="project" value="UniProtKB"/>
</dbReference>
<dbReference type="GO" id="GO:0098552">
    <property type="term" value="C:side of membrane"/>
    <property type="evidence" value="ECO:0007669"/>
    <property type="project" value="UniProtKB-KW"/>
</dbReference>
<dbReference type="GO" id="GO:0007342">
    <property type="term" value="P:fusion of sperm to egg plasma membrane involved in single fertilization"/>
    <property type="evidence" value="ECO:0000250"/>
    <property type="project" value="UniProtKB"/>
</dbReference>
<dbReference type="GO" id="GO:0019953">
    <property type="term" value="P:sexual reproduction"/>
    <property type="evidence" value="ECO:0000318"/>
    <property type="project" value="GO_Central"/>
</dbReference>
<dbReference type="CDD" id="cd05385">
    <property type="entry name" value="CAP_GLIPR1-like"/>
    <property type="match status" value="1"/>
</dbReference>
<dbReference type="FunFam" id="3.40.33.10:FF:000008">
    <property type="entry name" value="GLI pathogenesis-related 1 (Glioma)"/>
    <property type="match status" value="1"/>
</dbReference>
<dbReference type="Gene3D" id="3.40.33.10">
    <property type="entry name" value="CAP"/>
    <property type="match status" value="1"/>
</dbReference>
<dbReference type="InterPro" id="IPR018244">
    <property type="entry name" value="Allrgn_V5/Tpx1_CS"/>
</dbReference>
<dbReference type="InterPro" id="IPR014044">
    <property type="entry name" value="CAP_dom"/>
</dbReference>
<dbReference type="InterPro" id="IPR035940">
    <property type="entry name" value="CAP_sf"/>
</dbReference>
<dbReference type="InterPro" id="IPR001283">
    <property type="entry name" value="CRISP-related"/>
</dbReference>
<dbReference type="InterPro" id="IPR034121">
    <property type="entry name" value="SCP_GLIPR-1-like"/>
</dbReference>
<dbReference type="InterPro" id="IPR002413">
    <property type="entry name" value="V5_allergen-like"/>
</dbReference>
<dbReference type="PANTHER" id="PTHR10334">
    <property type="entry name" value="CYSTEINE-RICH SECRETORY PROTEIN-RELATED"/>
    <property type="match status" value="1"/>
</dbReference>
<dbReference type="Pfam" id="PF00188">
    <property type="entry name" value="CAP"/>
    <property type="match status" value="1"/>
</dbReference>
<dbReference type="PRINTS" id="PR00838">
    <property type="entry name" value="V5ALLERGEN"/>
</dbReference>
<dbReference type="PRINTS" id="PR00837">
    <property type="entry name" value="V5TPXLIKE"/>
</dbReference>
<dbReference type="SMART" id="SM00198">
    <property type="entry name" value="SCP"/>
    <property type="match status" value="1"/>
</dbReference>
<dbReference type="SUPFAM" id="SSF55797">
    <property type="entry name" value="PR-1-like"/>
    <property type="match status" value="1"/>
</dbReference>
<dbReference type="PROSITE" id="PS01009">
    <property type="entry name" value="CRISP_1"/>
    <property type="match status" value="1"/>
</dbReference>
<dbReference type="PROSITE" id="PS01010">
    <property type="entry name" value="CRISP_2"/>
    <property type="match status" value="1"/>
</dbReference>
<organism>
    <name type="scientific">Bos taurus</name>
    <name type="common">Bovine</name>
    <dbReference type="NCBI Taxonomy" id="9913"/>
    <lineage>
        <taxon>Eukaryota</taxon>
        <taxon>Metazoa</taxon>
        <taxon>Chordata</taxon>
        <taxon>Craniata</taxon>
        <taxon>Vertebrata</taxon>
        <taxon>Euteleostomi</taxon>
        <taxon>Mammalia</taxon>
        <taxon>Eutheria</taxon>
        <taxon>Laurasiatheria</taxon>
        <taxon>Artiodactyla</taxon>
        <taxon>Ruminantia</taxon>
        <taxon>Pecora</taxon>
        <taxon>Bovidae</taxon>
        <taxon>Bovinae</taxon>
        <taxon>Bos</taxon>
    </lineage>
</organism>
<keyword id="KW-1003">Cell membrane</keyword>
<keyword id="KW-0968">Cytoplasmic vesicle</keyword>
<keyword id="KW-0278">Fertilization</keyword>
<keyword id="KW-0325">Glycoprotein</keyword>
<keyword id="KW-0336">GPI-anchor</keyword>
<keyword id="KW-0449">Lipoprotein</keyword>
<keyword id="KW-0472">Membrane</keyword>
<keyword id="KW-1185">Reference proteome</keyword>
<keyword id="KW-0732">Signal</keyword>
<feature type="signal peptide" evidence="1">
    <location>
        <begin position="1"/>
        <end position="22"/>
    </location>
</feature>
<feature type="chain" id="PRO_0000272652" description="GLIPR1-like protein 1">
    <location>
        <begin position="23"/>
        <end position="220"/>
    </location>
</feature>
<feature type="propeptide" id="PRO_0000441106" description="Removed in mature form" evidence="7">
    <location>
        <begin position="221"/>
        <end position="241"/>
    </location>
</feature>
<feature type="domain" description="SCP" evidence="3">
    <location>
        <begin position="39"/>
        <end position="172"/>
    </location>
</feature>
<feature type="lipid moiety-binding region" description="GPI-anchor amidated serine" evidence="3">
    <location>
        <position position="220"/>
    </location>
</feature>
<name>GPRL1_BOVIN</name>
<comment type="function">
    <text evidence="4 5">Required for optimal fertilization at the stage of sperm-oocyte fusion, plays a role in optimizing acrosome function, the translocation of IZUMO1 during the acrosome reaction and the fertilization process (PubMed:22552861). Component of epididymosomes, one type of membranous microvesicules which mediate the transfer of lipids and proteins to spermatozoa plasma membrane during epididymal maturation (PubMed:23785420). Also a component of the CD9-positive microvesicules found in the cauda region (PubMed:23785420).</text>
</comment>
<comment type="subunit">
    <text evidence="2">Part of a oolemmal binding multimeric complex (IZUMO1 complex) composed at least of IZUMO1 and GLIPR1L1; the complex assemblage is influenced by the maturation status of the male germ cell. Interacts with IZUMO1.</text>
</comment>
<comment type="subcellular location">
    <subcellularLocation>
        <location evidence="2">Cytoplasmic vesicle</location>
        <location evidence="2">Secretory vesicle</location>
        <location evidence="2">Acrosome</location>
    </subcellularLocation>
    <subcellularLocation>
        <location evidence="4">Cell membrane</location>
        <topology evidence="4">Lipid-anchor</topology>
        <topology evidence="4">GPI-anchor</topology>
    </subcellularLocation>
    <subcellularLocation>
        <location evidence="4">Membrane raft</location>
    </subcellularLocation>
    <text evidence="2 4">Located in the connecting piece of elongated spermatids and sperm (By similarity). Also located in the apical region of the sperm head after sperm capacitation (By similarity). Located on sperm equatorial segment and neck (PubMed:22552861). Associated with epididymosomes from the caput and cauda epididymis (PubMed:22552861).</text>
</comment>
<comment type="tissue specificity">
    <text evidence="4">Highly expressed in testis, where it localizes to round and elongating spermatids and differentiated spermatozoa in the seminiferous tubules and epididymis (at protein level).</text>
</comment>
<comment type="PTM">
    <text evidence="4">N-glycosylated (PubMed:22552861). N-glycosylation decreases during the transit in the caput.</text>
</comment>
<comment type="similarity">
    <text evidence="7">Belongs to the CRISP family.</text>
</comment>
<comment type="caution">
    <text evidence="3 4">Positions of N-glycosylation sites are unclear (PubMed:22552861). No N-glycosylation site is detected by prediction tools.</text>
</comment>
<reference key="1">
    <citation type="submission" date="2005-11" db="EMBL/GenBank/DDBJ databases">
        <authorList>
            <consortium name="NIH - Mammalian Gene Collection (MGC) project"/>
        </authorList>
    </citation>
    <scope>NUCLEOTIDE SEQUENCE [LARGE SCALE MRNA]</scope>
    <source>
        <strain>Crossbred X Angus</strain>
        <tissue>Liver</tissue>
    </source>
</reference>
<reference key="2">
    <citation type="journal article" date="2012" name="J. Cell. Physiol.">
        <title>Bovine sperm raft membrane associated Glioma Pathogenesis-Related 1-like protein 1 (GliPr1L1) is modified during the epididymal transit and is potentially involved in sperm binding to the zona pellucida.</title>
        <authorList>
            <person name="Caballero J."/>
            <person name="Frenette G."/>
            <person name="D'Amours O."/>
            <person name="Belleannee C."/>
            <person name="Lacroix-Pepin N."/>
            <person name="Robert C."/>
            <person name="Sullivan R."/>
        </authorList>
    </citation>
    <scope>FUNCTION</scope>
    <scope>SUBCELLULAR LOCATION</scope>
    <scope>TISSUE SPECIFICITY</scope>
    <scope>GLYCOSYLATION</scope>
    <scope>GPI-ANCHOR</scope>
    <scope>IDENTIFICATION BY MASS SPECTROMETRY</scope>
</reference>
<reference key="3">
    <citation type="journal article" date="2013" name="PLoS ONE">
        <title>CD9-positive microvesicles mediate the transfer of molecules to Bovine Spermatozoa during epididymal maturation.</title>
        <authorList>
            <person name="Caballero J.N."/>
            <person name="Frenette G."/>
            <person name="Belleannee C."/>
            <person name="Sullivan R."/>
        </authorList>
    </citation>
    <scope>FUNCTION</scope>
</reference>
<evidence type="ECO:0000250" key="1"/>
<evidence type="ECO:0000250" key="2">
    <source>
        <dbReference type="UniProtKB" id="Q9DAG6"/>
    </source>
</evidence>
<evidence type="ECO:0000255" key="3"/>
<evidence type="ECO:0000269" key="4">
    <source>
    </source>
</evidence>
<evidence type="ECO:0000269" key="5">
    <source>
    </source>
</evidence>
<evidence type="ECO:0000303" key="6">
    <source>
    </source>
</evidence>
<evidence type="ECO:0000305" key="7"/>
<proteinExistence type="evidence at protein level"/>
<accession>Q32LB5</accession>